<proteinExistence type="evidence at transcript level"/>
<accession>Q7TQM5</accession>
<reference key="1">
    <citation type="journal article" date="2003" name="J. Biol. Chem.">
        <title>Molecular cloning and expression of keratinocyte proline-rich protein, a novel squamous epithelial marker isolated during skin development.</title>
        <authorList>
            <person name="Kong W."/>
            <person name="Longaker M.T."/>
            <person name="Lorenz H.P."/>
        </authorList>
    </citation>
    <scope>NUCLEOTIDE SEQUENCE [MRNA]</scope>
    <scope>SUBCELLULAR LOCATION</scope>
    <scope>TISSUE SPECIFICITY</scope>
    <scope>DEVELOPMENTAL STAGE</scope>
    <source>
        <strain>Sprague-Dawley</strain>
        <tissue>Fetal skin</tissue>
    </source>
</reference>
<organism>
    <name type="scientific">Rattus norvegicus</name>
    <name type="common">Rat</name>
    <dbReference type="NCBI Taxonomy" id="10116"/>
    <lineage>
        <taxon>Eukaryota</taxon>
        <taxon>Metazoa</taxon>
        <taxon>Chordata</taxon>
        <taxon>Craniata</taxon>
        <taxon>Vertebrata</taxon>
        <taxon>Euteleostomi</taxon>
        <taxon>Mammalia</taxon>
        <taxon>Eutheria</taxon>
        <taxon>Euarchontoglires</taxon>
        <taxon>Glires</taxon>
        <taxon>Rodentia</taxon>
        <taxon>Myomorpha</taxon>
        <taxon>Muroidea</taxon>
        <taxon>Muridae</taxon>
        <taxon>Murinae</taxon>
        <taxon>Rattus</taxon>
    </lineage>
</organism>
<protein>
    <recommendedName>
        <fullName>Keratinocyte proline-rich protein</fullName>
    </recommendedName>
</protein>
<feature type="chain" id="PRO_0000271009" description="Keratinocyte proline-rich protein">
    <location>
        <begin position="1"/>
        <end position="699"/>
    </location>
</feature>
<feature type="region of interest" description="Disordered" evidence="2">
    <location>
        <begin position="448"/>
        <end position="533"/>
    </location>
</feature>
<feature type="compositionally biased region" description="Pro residues" evidence="2">
    <location>
        <begin position="448"/>
        <end position="477"/>
    </location>
</feature>
<feature type="compositionally biased region" description="Pro residues" evidence="2">
    <location>
        <begin position="513"/>
        <end position="533"/>
    </location>
</feature>
<feature type="modified residue" description="Phosphoserine" evidence="1">
    <location>
        <position position="436"/>
    </location>
</feature>
<comment type="subcellular location">
    <subcellularLocation>
        <location evidence="3">Cytoplasm</location>
    </subcellularLocation>
</comment>
<comment type="tissue specificity">
    <text evidence="3">Expressed in the stratified squamous epithelial layers of the skin, esophagus and tongue.</text>
</comment>
<comment type="developmental stage">
    <text evidence="3">Expressed in skin and hair germ cells at 19, 20 and 21 dpc.</text>
</comment>
<sequence length="699" mass="76358">MCDQQEIQCCGPIPQCCVKGSSFGPSQFPYANNQVLVEAPCEMQFLECAAPCPIQVSQTPCQSSTTEVKGQAPCKTTNVKCQTKTTQVKCQPKTTEIKCQAPCQAQVSCVQCQAPCQSQVSYVQVPQPPQTYYVECAPVYYTETRFVEYPVSNYVPVPAPQPGYTYVECPSLGQGQGQGSFSTRYQYQGSYGSCTSQSQSRGSYSSCGPQHQSQASYSYCEPQFQSRPSYTNCGTQRQSQASFGSCTSQLQSRASYSNCSSQRRSGTSFSTCAPQCQGQGTYGSFTAQRKSQSASRCLPSRRLQPSYRSCSPPRHSEPCYSSCLPSRCSSGSYNYCTPPRRSEPIYGSHCSPRGRPSGCSQRCGPKCRIEISSPCCPRQVPPQRCPVQIPPIRGRSRSCPRQPSWGVSCPDLRPCAEPHAFPRPCRPQRLDRSPESSWRRCPVPAPRPYPRPEPCPSPEPRPCPRPRPRPEPCPSPEPRPRPRPDPCPSPELRPRPRPEPCPSPEPRPRPRPDPCPSPEPRPRPCPEPCPSPEPRPCPPLRRFSEPCLYPEPCSVSKPVPCPVPCPAPHPRPVHCETPGRRPQPSPRSQPCPHPEPMPRPVPCSSPVPCGDPIHCPSPCSGHNPVPYSQELGCHESNPCRLDTEGPSSYSFSQGQESNGCCVSGGVFSGSRGLSGCGDQGNTYRGMNCGACGGTQGAYF</sequence>
<dbReference type="EMBL" id="AF548002">
    <property type="protein sequence ID" value="AAP74957.1"/>
    <property type="molecule type" value="mRNA"/>
</dbReference>
<dbReference type="RefSeq" id="NP_001002290.1">
    <property type="nucleotide sequence ID" value="NM_001002290.1"/>
</dbReference>
<dbReference type="FunCoup" id="Q7TQM5">
    <property type="interactions" value="11"/>
</dbReference>
<dbReference type="STRING" id="10116.ENSRNOP00000040866"/>
<dbReference type="PhosphoSitePlus" id="Q7TQM5"/>
<dbReference type="PaxDb" id="10116-ENSRNOP00000040866"/>
<dbReference type="GeneID" id="432393"/>
<dbReference type="KEGG" id="rno:432393"/>
<dbReference type="UCSC" id="RGD:1303244">
    <property type="organism name" value="rat"/>
</dbReference>
<dbReference type="AGR" id="RGD:1303244"/>
<dbReference type="CTD" id="448834"/>
<dbReference type="RGD" id="1303244">
    <property type="gene designation" value="Kprp"/>
</dbReference>
<dbReference type="eggNOG" id="ENOG502S65C">
    <property type="taxonomic scope" value="Eukaryota"/>
</dbReference>
<dbReference type="InParanoid" id="Q7TQM5"/>
<dbReference type="OrthoDB" id="9451806at2759"/>
<dbReference type="PhylomeDB" id="Q7TQM5"/>
<dbReference type="PRO" id="PR:Q7TQM5"/>
<dbReference type="Proteomes" id="UP000002494">
    <property type="component" value="Unplaced"/>
</dbReference>
<dbReference type="GO" id="GO:0005737">
    <property type="term" value="C:cytoplasm"/>
    <property type="evidence" value="ECO:0007669"/>
    <property type="project" value="UniProtKB-SubCell"/>
</dbReference>
<dbReference type="InterPro" id="IPR052881">
    <property type="entry name" value="Keratinocyte_PR"/>
</dbReference>
<dbReference type="PANTHER" id="PTHR48138:SF2">
    <property type="entry name" value="KERATINOCYTE PROLINE-RICH PROTEIN"/>
    <property type="match status" value="1"/>
</dbReference>
<dbReference type="PANTHER" id="PTHR48138">
    <property type="entry name" value="KERATINOCYTE PROLINE-RICH PROTEIN-RELATED"/>
    <property type="match status" value="1"/>
</dbReference>
<evidence type="ECO:0000250" key="1">
    <source>
        <dbReference type="UniProtKB" id="Q5T749"/>
    </source>
</evidence>
<evidence type="ECO:0000256" key="2">
    <source>
        <dbReference type="SAM" id="MobiDB-lite"/>
    </source>
</evidence>
<evidence type="ECO:0000269" key="3">
    <source>
    </source>
</evidence>
<keyword id="KW-0963">Cytoplasm</keyword>
<keyword id="KW-0597">Phosphoprotein</keyword>
<keyword id="KW-1185">Reference proteome</keyword>
<gene>
    <name type="primary">Kprp</name>
</gene>
<name>KPRP_RAT</name>